<dbReference type="EC" id="3.1.13.-" evidence="1"/>
<dbReference type="EMBL" id="CP000783">
    <property type="protein sequence ID" value="ABU77265.1"/>
    <property type="molecule type" value="Genomic_DNA"/>
</dbReference>
<dbReference type="RefSeq" id="WP_004385023.1">
    <property type="nucleotide sequence ID" value="NC_009778.1"/>
</dbReference>
<dbReference type="SMR" id="A7MFC6"/>
<dbReference type="KEGG" id="esa:ESA_02012"/>
<dbReference type="HOGENOM" id="CLU_082724_0_0_6"/>
<dbReference type="Proteomes" id="UP000000260">
    <property type="component" value="Chromosome"/>
</dbReference>
<dbReference type="GO" id="GO:0005829">
    <property type="term" value="C:cytosol"/>
    <property type="evidence" value="ECO:0007669"/>
    <property type="project" value="TreeGrafter"/>
</dbReference>
<dbReference type="GO" id="GO:0008408">
    <property type="term" value="F:3'-5' exonuclease activity"/>
    <property type="evidence" value="ECO:0007669"/>
    <property type="project" value="TreeGrafter"/>
</dbReference>
<dbReference type="GO" id="GO:0000287">
    <property type="term" value="F:magnesium ion binding"/>
    <property type="evidence" value="ECO:0007669"/>
    <property type="project" value="UniProtKB-UniRule"/>
</dbReference>
<dbReference type="GO" id="GO:0003676">
    <property type="term" value="F:nucleic acid binding"/>
    <property type="evidence" value="ECO:0007669"/>
    <property type="project" value="InterPro"/>
</dbReference>
<dbReference type="GO" id="GO:0016896">
    <property type="term" value="F:RNA exonuclease activity, producing 5'-phosphomonoesters"/>
    <property type="evidence" value="ECO:0007669"/>
    <property type="project" value="UniProtKB-UniRule"/>
</dbReference>
<dbReference type="GO" id="GO:0045004">
    <property type="term" value="P:DNA replication proofreading"/>
    <property type="evidence" value="ECO:0007669"/>
    <property type="project" value="TreeGrafter"/>
</dbReference>
<dbReference type="GO" id="GO:0008033">
    <property type="term" value="P:tRNA processing"/>
    <property type="evidence" value="ECO:0007669"/>
    <property type="project" value="UniProtKB-KW"/>
</dbReference>
<dbReference type="CDD" id="cd06134">
    <property type="entry name" value="RNaseT"/>
    <property type="match status" value="1"/>
</dbReference>
<dbReference type="FunFam" id="3.30.420.10:FF:000009">
    <property type="entry name" value="Ribonuclease T"/>
    <property type="match status" value="1"/>
</dbReference>
<dbReference type="Gene3D" id="3.30.420.10">
    <property type="entry name" value="Ribonuclease H-like superfamily/Ribonuclease H"/>
    <property type="match status" value="1"/>
</dbReference>
<dbReference type="HAMAP" id="MF_00157">
    <property type="entry name" value="RNase_T"/>
    <property type="match status" value="1"/>
</dbReference>
<dbReference type="InterPro" id="IPR013520">
    <property type="entry name" value="Exonuclease_RNaseT/DNA_pol3"/>
</dbReference>
<dbReference type="InterPro" id="IPR005987">
    <property type="entry name" value="RNase_T"/>
</dbReference>
<dbReference type="InterPro" id="IPR012337">
    <property type="entry name" value="RNaseH-like_sf"/>
</dbReference>
<dbReference type="InterPro" id="IPR036397">
    <property type="entry name" value="RNaseH_sf"/>
</dbReference>
<dbReference type="NCBIfam" id="TIGR01298">
    <property type="entry name" value="RNaseT"/>
    <property type="match status" value="1"/>
</dbReference>
<dbReference type="PANTHER" id="PTHR30231">
    <property type="entry name" value="DNA POLYMERASE III SUBUNIT EPSILON"/>
    <property type="match status" value="1"/>
</dbReference>
<dbReference type="PANTHER" id="PTHR30231:SF2">
    <property type="entry name" value="RIBONUCLEASE T"/>
    <property type="match status" value="1"/>
</dbReference>
<dbReference type="Pfam" id="PF00929">
    <property type="entry name" value="RNase_T"/>
    <property type="match status" value="1"/>
</dbReference>
<dbReference type="SMART" id="SM00479">
    <property type="entry name" value="EXOIII"/>
    <property type="match status" value="1"/>
</dbReference>
<dbReference type="SUPFAM" id="SSF53098">
    <property type="entry name" value="Ribonuclease H-like"/>
    <property type="match status" value="1"/>
</dbReference>
<organism>
    <name type="scientific">Cronobacter sakazakii (strain ATCC BAA-894)</name>
    <name type="common">Enterobacter sakazakii</name>
    <dbReference type="NCBI Taxonomy" id="290339"/>
    <lineage>
        <taxon>Bacteria</taxon>
        <taxon>Pseudomonadati</taxon>
        <taxon>Pseudomonadota</taxon>
        <taxon>Gammaproteobacteria</taxon>
        <taxon>Enterobacterales</taxon>
        <taxon>Enterobacteriaceae</taxon>
        <taxon>Cronobacter</taxon>
    </lineage>
</organism>
<keyword id="KW-0269">Exonuclease</keyword>
<keyword id="KW-0378">Hydrolase</keyword>
<keyword id="KW-0460">Magnesium</keyword>
<keyword id="KW-0479">Metal-binding</keyword>
<keyword id="KW-0540">Nuclease</keyword>
<keyword id="KW-1185">Reference proteome</keyword>
<keyword id="KW-0819">tRNA processing</keyword>
<comment type="function">
    <text evidence="1">Trims short 3' overhangs of a variety of RNA species, leaving a one or two nucleotide 3' overhang. Responsible for the end-turnover of tRNA: specifically removes the terminal AMP residue from uncharged tRNA (tRNA-C-C-A). Also appears to be involved in tRNA biosynthesis.</text>
</comment>
<comment type="cofactor">
    <cofactor evidence="1">
        <name>Mg(2+)</name>
        <dbReference type="ChEBI" id="CHEBI:18420"/>
    </cofactor>
    <text evidence="1">Binds two Mg(2+) per subunit. The active form of the enzyme binds two Mg(2+) ions in its active site. The first Mg(2+) forms only one salt bridge with the protein.</text>
</comment>
<comment type="subunit">
    <text evidence="1">Homodimer.</text>
</comment>
<comment type="similarity">
    <text evidence="1">Belongs to the RNase T family.</text>
</comment>
<evidence type="ECO:0000255" key="1">
    <source>
        <dbReference type="HAMAP-Rule" id="MF_00157"/>
    </source>
</evidence>
<feature type="chain" id="PRO_1000011393" description="Ribonuclease T">
    <location>
        <begin position="1"/>
        <end position="223"/>
    </location>
</feature>
<feature type="domain" description="Exonuclease" evidence="1">
    <location>
        <begin position="20"/>
        <end position="194"/>
    </location>
</feature>
<feature type="active site" description="Proton donor/acceptor" evidence="1">
    <location>
        <position position="181"/>
    </location>
</feature>
<feature type="binding site" evidence="1">
    <location>
        <position position="23"/>
    </location>
    <ligand>
        <name>Mg(2+)</name>
        <dbReference type="ChEBI" id="CHEBI:18420"/>
        <label>1</label>
        <note>catalytic</note>
    </ligand>
</feature>
<feature type="binding site" evidence="1">
    <location>
        <position position="23"/>
    </location>
    <ligand>
        <name>Mg(2+)</name>
        <dbReference type="ChEBI" id="CHEBI:18420"/>
        <label>2</label>
        <note>catalytic</note>
    </ligand>
</feature>
<feature type="binding site" evidence="1">
    <location>
        <position position="25"/>
    </location>
    <ligand>
        <name>Mg(2+)</name>
        <dbReference type="ChEBI" id="CHEBI:18420"/>
        <label>2</label>
        <note>catalytic</note>
    </ligand>
</feature>
<feature type="binding site" evidence="1">
    <location>
        <position position="181"/>
    </location>
    <ligand>
        <name>Mg(2+)</name>
        <dbReference type="ChEBI" id="CHEBI:18420"/>
        <label>2</label>
        <note>catalytic</note>
    </ligand>
</feature>
<feature type="binding site" evidence="1">
    <location>
        <position position="186"/>
    </location>
    <ligand>
        <name>Mg(2+)</name>
        <dbReference type="ChEBI" id="CHEBI:18420"/>
        <label>2</label>
        <note>catalytic</note>
    </ligand>
</feature>
<feature type="site" description="Important for substrate binding and specificity" evidence="1">
    <location>
        <position position="29"/>
    </location>
</feature>
<feature type="site" description="Important for substrate binding and specificity" evidence="1">
    <location>
        <position position="77"/>
    </location>
</feature>
<feature type="site" description="Important for substrate binding and specificity" evidence="1">
    <location>
        <position position="124"/>
    </location>
</feature>
<feature type="site" description="Important for substrate binding and specificity" evidence="1">
    <location>
        <position position="146"/>
    </location>
</feature>
<gene>
    <name evidence="1" type="primary">rnt</name>
    <name type="ordered locus">ESA_02012</name>
</gene>
<sequence>MSDNAQLTGLSDRFRGFYPVVIDVETAGFNAKTDALLEIAAVTLKMDADGWLTPDETLHFHVEPFEGAILQPEALAFNGIDPHNPLRGAVSEYDALHAIFKMVRKGMKESNCNRAIMVAHNATFDHSFMMAAAERASLKRNPFHPFVTFDTAALSGLALGQTVLAKACIAAGMPFDSTQAHSALYDTEQTALLFCEIVNRWKRLGGWPVPPLAAEDATPQDGE</sequence>
<protein>
    <recommendedName>
        <fullName evidence="1">Ribonuclease T</fullName>
        <ecNumber evidence="1">3.1.13.-</ecNumber>
    </recommendedName>
    <alternativeName>
        <fullName evidence="1">Exoribonuclease T</fullName>
        <shortName evidence="1">RNase T</shortName>
    </alternativeName>
</protein>
<proteinExistence type="inferred from homology"/>
<name>RNT_CROS8</name>
<accession>A7MFC6</accession>
<reference key="1">
    <citation type="journal article" date="2010" name="PLoS ONE">
        <title>Genome sequence of Cronobacter sakazakii BAA-894 and comparative genomic hybridization analysis with other Cronobacter species.</title>
        <authorList>
            <person name="Kucerova E."/>
            <person name="Clifton S.W."/>
            <person name="Xia X.Q."/>
            <person name="Long F."/>
            <person name="Porwollik S."/>
            <person name="Fulton L."/>
            <person name="Fronick C."/>
            <person name="Minx P."/>
            <person name="Kyung K."/>
            <person name="Warren W."/>
            <person name="Fulton R."/>
            <person name="Feng D."/>
            <person name="Wollam A."/>
            <person name="Shah N."/>
            <person name="Bhonagiri V."/>
            <person name="Nash W.E."/>
            <person name="Hallsworth-Pepin K."/>
            <person name="Wilson R.K."/>
            <person name="McClelland M."/>
            <person name="Forsythe S.J."/>
        </authorList>
    </citation>
    <scope>NUCLEOTIDE SEQUENCE [LARGE SCALE GENOMIC DNA]</scope>
    <source>
        <strain>ATCC BAA-894</strain>
    </source>
</reference>